<evidence type="ECO:0000255" key="1">
    <source>
        <dbReference type="PROSITE-ProRule" id="PRU00108"/>
    </source>
</evidence>
<evidence type="ECO:0000256" key="2">
    <source>
        <dbReference type="SAM" id="MobiDB-lite"/>
    </source>
</evidence>
<evidence type="ECO:0000269" key="3">
    <source>
    </source>
</evidence>
<evidence type="ECO:0000305" key="4"/>
<evidence type="ECO:0007744" key="5">
    <source>
    </source>
</evidence>
<name>HXD9_HUMAN</name>
<reference key="1">
    <citation type="journal article" date="1991" name="EMBO J.">
        <title>HOX4 genes encode transcription factors with potential auto- and cross-regulatory capacities.</title>
        <authorList>
            <person name="Zappavigna V."/>
            <person name="Renucci A."/>
            <person name="Izpisua-Belmonte J.-C."/>
            <person name="Urier G."/>
            <person name="Peschle C."/>
            <person name="Duboule D."/>
        </authorList>
    </citation>
    <scope>NUCLEOTIDE SEQUENCE [MRNA]</scope>
    <source>
        <tissue>Spinal cord</tissue>
    </source>
</reference>
<reference key="2">
    <citation type="journal article" date="2005" name="Nature">
        <title>Generation and annotation of the DNA sequences of human chromosomes 2 and 4.</title>
        <authorList>
            <person name="Hillier L.W."/>
            <person name="Graves T.A."/>
            <person name="Fulton R.S."/>
            <person name="Fulton L.A."/>
            <person name="Pepin K.H."/>
            <person name="Minx P."/>
            <person name="Wagner-McPherson C."/>
            <person name="Layman D."/>
            <person name="Wylie K."/>
            <person name="Sekhon M."/>
            <person name="Becker M.C."/>
            <person name="Fewell G.A."/>
            <person name="Delehaunty K.D."/>
            <person name="Miner T.L."/>
            <person name="Nash W.E."/>
            <person name="Kremitzki C."/>
            <person name="Oddy L."/>
            <person name="Du H."/>
            <person name="Sun H."/>
            <person name="Bradshaw-Cordum H."/>
            <person name="Ali J."/>
            <person name="Carter J."/>
            <person name="Cordes M."/>
            <person name="Harris A."/>
            <person name="Isak A."/>
            <person name="van Brunt A."/>
            <person name="Nguyen C."/>
            <person name="Du F."/>
            <person name="Courtney L."/>
            <person name="Kalicki J."/>
            <person name="Ozersky P."/>
            <person name="Abbott S."/>
            <person name="Armstrong J."/>
            <person name="Belter E.A."/>
            <person name="Caruso L."/>
            <person name="Cedroni M."/>
            <person name="Cotton M."/>
            <person name="Davidson T."/>
            <person name="Desai A."/>
            <person name="Elliott G."/>
            <person name="Erb T."/>
            <person name="Fronick C."/>
            <person name="Gaige T."/>
            <person name="Haakenson W."/>
            <person name="Haglund K."/>
            <person name="Holmes A."/>
            <person name="Harkins R."/>
            <person name="Kim K."/>
            <person name="Kruchowski S.S."/>
            <person name="Strong C.M."/>
            <person name="Grewal N."/>
            <person name="Goyea E."/>
            <person name="Hou S."/>
            <person name="Levy A."/>
            <person name="Martinka S."/>
            <person name="Mead K."/>
            <person name="McLellan M.D."/>
            <person name="Meyer R."/>
            <person name="Randall-Maher J."/>
            <person name="Tomlinson C."/>
            <person name="Dauphin-Kohlberg S."/>
            <person name="Kozlowicz-Reilly A."/>
            <person name="Shah N."/>
            <person name="Swearengen-Shahid S."/>
            <person name="Snider J."/>
            <person name="Strong J.T."/>
            <person name="Thompson J."/>
            <person name="Yoakum M."/>
            <person name="Leonard S."/>
            <person name="Pearman C."/>
            <person name="Trani L."/>
            <person name="Radionenko M."/>
            <person name="Waligorski J.E."/>
            <person name="Wang C."/>
            <person name="Rock S.M."/>
            <person name="Tin-Wollam A.-M."/>
            <person name="Maupin R."/>
            <person name="Latreille P."/>
            <person name="Wendl M.C."/>
            <person name="Yang S.-P."/>
            <person name="Pohl C."/>
            <person name="Wallis J.W."/>
            <person name="Spieth J."/>
            <person name="Bieri T.A."/>
            <person name="Berkowicz N."/>
            <person name="Nelson J.O."/>
            <person name="Osborne J."/>
            <person name="Ding L."/>
            <person name="Meyer R."/>
            <person name="Sabo A."/>
            <person name="Shotland Y."/>
            <person name="Sinha P."/>
            <person name="Wohldmann P.E."/>
            <person name="Cook L.L."/>
            <person name="Hickenbotham M.T."/>
            <person name="Eldred J."/>
            <person name="Williams D."/>
            <person name="Jones T.A."/>
            <person name="She X."/>
            <person name="Ciccarelli F.D."/>
            <person name="Izaurralde E."/>
            <person name="Taylor J."/>
            <person name="Schmutz J."/>
            <person name="Myers R.M."/>
            <person name="Cox D.R."/>
            <person name="Huang X."/>
            <person name="McPherson J.D."/>
            <person name="Mardis E.R."/>
            <person name="Clifton S.W."/>
            <person name="Warren W.C."/>
            <person name="Chinwalla A.T."/>
            <person name="Eddy S.R."/>
            <person name="Marra M.A."/>
            <person name="Ovcharenko I."/>
            <person name="Furey T.S."/>
            <person name="Miller W."/>
            <person name="Eichler E.E."/>
            <person name="Bork P."/>
            <person name="Suyama M."/>
            <person name="Torrents D."/>
            <person name="Waterston R.H."/>
            <person name="Wilson R.K."/>
        </authorList>
    </citation>
    <scope>NUCLEOTIDE SEQUENCE [LARGE SCALE GENOMIC DNA]</scope>
</reference>
<reference key="3">
    <citation type="journal article" date="2004" name="Genome Res.">
        <title>The status, quality, and expansion of the NIH full-length cDNA project: the Mammalian Gene Collection (MGC).</title>
        <authorList>
            <consortium name="The MGC Project Team"/>
        </authorList>
    </citation>
    <scope>NUCLEOTIDE SEQUENCE [LARGE SCALE MRNA]</scope>
    <source>
        <tissue>Colon</tissue>
    </source>
</reference>
<reference key="4">
    <citation type="journal article" date="1989" name="Genes Dev.">
        <title>Complementary homeo protein gradients in developing limb buds.</title>
        <authorList>
            <person name="Oliver G."/>
            <person name="Sidell N."/>
            <person name="Fiske N."/>
            <person name="Heinzmann C."/>
            <person name="Mohandas T."/>
            <person name="Sparkes R.S."/>
            <person name="De Robertis E.M."/>
        </authorList>
    </citation>
    <scope>NUCLEOTIDE SEQUENCE [GENOMIC DNA] OF 274-352</scope>
</reference>
<reference key="5">
    <citation type="journal article" date="1989" name="Nucleic Acids Res.">
        <title>The human HOX gene family.</title>
        <authorList>
            <person name="Acampora D."/>
            <person name="D'Esposito M."/>
            <person name="Faiella A."/>
            <person name="Pannese M."/>
            <person name="Migliaccio E."/>
            <person name="Morelli F."/>
            <person name="Stornaiuolo A."/>
            <person name="Nigro V."/>
            <person name="Simeone A."/>
            <person name="Boncinelli E."/>
        </authorList>
    </citation>
    <scope>NUCLEOTIDE SEQUENCE [GENOMIC DNA] OF 285-350</scope>
</reference>
<reference key="6">
    <citation type="journal article" date="2008" name="Proc. Natl. Acad. Sci. U.S.A.">
        <title>A quantitative atlas of mitotic phosphorylation.</title>
        <authorList>
            <person name="Dephoure N."/>
            <person name="Zhou C."/>
            <person name="Villen J."/>
            <person name="Beausoleil S.A."/>
            <person name="Bakalarski C.E."/>
            <person name="Elledge S.J."/>
            <person name="Gygi S.P."/>
        </authorList>
    </citation>
    <scope>IDENTIFICATION BY MASS SPECTROMETRY [LARGE SCALE ANALYSIS]</scope>
    <source>
        <tissue>Cervix carcinoma</tissue>
    </source>
</reference>
<reference key="7">
    <citation type="journal article" date="2013" name="J. Proteome Res.">
        <title>Toward a comprehensive characterization of a human cancer cell phosphoproteome.</title>
        <authorList>
            <person name="Zhou H."/>
            <person name="Di Palma S."/>
            <person name="Preisinger C."/>
            <person name="Peng M."/>
            <person name="Polat A.N."/>
            <person name="Heck A.J."/>
            <person name="Mohammed S."/>
        </authorList>
    </citation>
    <scope>PHOSPHORYLATION [LARGE SCALE ANALYSIS] AT SER-146</scope>
    <scope>IDENTIFICATION BY MASS SPECTROMETRY [LARGE SCALE ANALYSIS]</scope>
    <source>
        <tissue>Cervix carcinoma</tissue>
    </source>
</reference>
<reference key="8">
    <citation type="journal article" date="2002" name="Teratology">
        <title>Complete mutation analysis panel of the 39 human HOX genes.</title>
        <authorList>
            <person name="Kosaki K."/>
            <person name="Kosaki R."/>
            <person name="Suzuki T."/>
            <person name="Yoshihashi H."/>
            <person name="Takahashi T."/>
            <person name="Sasaki K."/>
            <person name="Tomita M."/>
            <person name="McGinnis W."/>
            <person name="Matsuo N."/>
        </authorList>
    </citation>
    <scope>VARIANT GLN-269 DEL</scope>
</reference>
<accession>P28356</accession>
<accession>Q86ST1</accession>
<keyword id="KW-0217">Developmental protein</keyword>
<keyword id="KW-0238">DNA-binding</keyword>
<keyword id="KW-0371">Homeobox</keyword>
<keyword id="KW-0539">Nucleus</keyword>
<keyword id="KW-0597">Phosphoprotein</keyword>
<keyword id="KW-1267">Proteomics identification</keyword>
<keyword id="KW-1185">Reference proteome</keyword>
<keyword id="KW-0804">Transcription</keyword>
<keyword id="KW-0805">Transcription regulation</keyword>
<sequence>MLGGSAGRLKMSSSGTLSNYYVDSLIGHEGDEVFAARFGPPGPGAQGRPAGVADGPAATAAEFASCSFAPRSAVFSASWSAVPSQPPAAAAMSGLYHPYVPPPPLAASASEPGRYVRSWMEPLPGFPGGAGGGGGGGGGGPGRGPSPGPSGPANGRHYGIKPETRAAPAPATAASTTSSSSTSLSSSSKRTECSVARESQGSSGPEFSCNSFLQEKAAAATGGTGPGAGIGAATGTGGSSEPSACSDHPIPGCSLKEEEKQHSQPQQQQLDPNNPAANWIHARSTRKKRCPYTKYQTLELEKEFLFNMYLTRDRRYEVARILNLTERQVKIWFQNRRMKMKKMSKEKCPKGD</sequence>
<comment type="function">
    <text>Sequence-specific transcription factor which is part of a developmental regulatory system that provides cells with specific positional identities on the anterior-posterior axis.</text>
</comment>
<comment type="subcellular location">
    <subcellularLocation>
        <location>Nucleus</location>
    </subcellularLocation>
</comment>
<comment type="developmental stage">
    <text>Expressed in the developing limb buds.</text>
</comment>
<comment type="similarity">
    <text evidence="4">Belongs to the Abd-B homeobox family.</text>
</comment>
<comment type="caution">
    <text evidence="4">It is uncertain whether Met-1 or Met-11 is the initiator.</text>
</comment>
<comment type="sequence caution" evidence="4">
    <conflict type="erroneous initiation">
        <sequence resource="EMBL-CDS" id="AAH44855"/>
    </conflict>
    <text>Truncated N-terminus.</text>
</comment>
<comment type="sequence caution" evidence="4">
    <conflict type="erroneous initiation">
        <sequence resource="EMBL-CDS" id="CAA42016"/>
    </conflict>
    <text>Truncated N-terminus.</text>
</comment>
<gene>
    <name type="primary">HOXD9</name>
    <name type="synonym">HOX4C</name>
</gene>
<dbReference type="EMBL" id="X59372">
    <property type="protein sequence ID" value="CAA42016.1"/>
    <property type="status" value="ALT_INIT"/>
    <property type="molecule type" value="mRNA"/>
</dbReference>
<dbReference type="EMBL" id="AC009336">
    <property type="status" value="NOT_ANNOTATED_CDS"/>
    <property type="molecule type" value="Genomic_DNA"/>
</dbReference>
<dbReference type="EMBL" id="BC044855">
    <property type="protein sequence ID" value="AAH44855.2"/>
    <property type="status" value="ALT_INIT"/>
    <property type="molecule type" value="mRNA"/>
</dbReference>
<dbReference type="EMBL" id="X15506">
    <property type="protein sequence ID" value="CAA33528.1"/>
    <property type="molecule type" value="Genomic_DNA"/>
</dbReference>
<dbReference type="CCDS" id="CCDS2267.2"/>
<dbReference type="PIR" id="S18649">
    <property type="entry name" value="S18649"/>
</dbReference>
<dbReference type="RefSeq" id="NP_055028.3">
    <property type="nucleotide sequence ID" value="NM_014213.3"/>
</dbReference>
<dbReference type="BMRB" id="P28356"/>
<dbReference type="SMR" id="P28356"/>
<dbReference type="BioGRID" id="109475">
    <property type="interactions" value="10"/>
</dbReference>
<dbReference type="CORUM" id="P28356"/>
<dbReference type="FunCoup" id="P28356">
    <property type="interactions" value="612"/>
</dbReference>
<dbReference type="IntAct" id="P28356">
    <property type="interactions" value="5"/>
</dbReference>
<dbReference type="STRING" id="9606.ENSP00000249499"/>
<dbReference type="GlyGen" id="P28356">
    <property type="glycosylation" value="4 sites, 1 O-linked glycan (4 sites)"/>
</dbReference>
<dbReference type="iPTMnet" id="P28356"/>
<dbReference type="PhosphoSitePlus" id="P28356"/>
<dbReference type="BioMuta" id="HOXD9"/>
<dbReference type="DMDM" id="294862543"/>
<dbReference type="jPOST" id="P28356"/>
<dbReference type="MassIVE" id="P28356"/>
<dbReference type="PaxDb" id="9606-ENSP00000249499"/>
<dbReference type="PeptideAtlas" id="P28356"/>
<dbReference type="ProteomicsDB" id="54480"/>
<dbReference type="Antibodypedia" id="33907">
    <property type="antibodies" value="212 antibodies from 28 providers"/>
</dbReference>
<dbReference type="DNASU" id="3235"/>
<dbReference type="Ensembl" id="ENST00000249499.8">
    <property type="protein sequence ID" value="ENSP00000249499.6"/>
    <property type="gene ID" value="ENSG00000128709.13"/>
</dbReference>
<dbReference type="GeneID" id="3235"/>
<dbReference type="KEGG" id="hsa:3235"/>
<dbReference type="MANE-Select" id="ENST00000249499.8">
    <property type="protein sequence ID" value="ENSP00000249499.6"/>
    <property type="RefSeq nucleotide sequence ID" value="NM_014213.4"/>
    <property type="RefSeq protein sequence ID" value="NP_055028.3"/>
</dbReference>
<dbReference type="UCSC" id="uc010zex.3">
    <property type="organism name" value="human"/>
</dbReference>
<dbReference type="AGR" id="HGNC:5140"/>
<dbReference type="CTD" id="3235"/>
<dbReference type="DisGeNET" id="3235"/>
<dbReference type="GeneCards" id="HOXD9"/>
<dbReference type="HGNC" id="HGNC:5140">
    <property type="gene designation" value="HOXD9"/>
</dbReference>
<dbReference type="HPA" id="ENSG00000128709">
    <property type="expression patterns" value="Tissue enhanced (cervix, endometrium, kidney)"/>
</dbReference>
<dbReference type="MIM" id="142982">
    <property type="type" value="gene"/>
</dbReference>
<dbReference type="neXtProt" id="NX_P28356"/>
<dbReference type="OpenTargets" id="ENSG00000128709"/>
<dbReference type="PharmGKB" id="PA29414"/>
<dbReference type="VEuPathDB" id="HostDB:ENSG00000128709"/>
<dbReference type="eggNOG" id="KOG0487">
    <property type="taxonomic scope" value="Eukaryota"/>
</dbReference>
<dbReference type="GeneTree" id="ENSGT00940000161503"/>
<dbReference type="InParanoid" id="P28356"/>
<dbReference type="OMA" id="MRSWMEP"/>
<dbReference type="OrthoDB" id="6159439at2759"/>
<dbReference type="PAN-GO" id="P28356">
    <property type="GO annotations" value="7 GO annotations based on evolutionary models"/>
</dbReference>
<dbReference type="PhylomeDB" id="P28356"/>
<dbReference type="TreeFam" id="TF317819"/>
<dbReference type="PathwayCommons" id="P28356"/>
<dbReference type="SignaLink" id="P28356"/>
<dbReference type="SIGNOR" id="P28356"/>
<dbReference type="BioGRID-ORCS" id="3235">
    <property type="hits" value="18 hits in 1174 CRISPR screens"/>
</dbReference>
<dbReference type="GeneWiki" id="HOXD9"/>
<dbReference type="GenomeRNAi" id="3235"/>
<dbReference type="Pharos" id="P28356">
    <property type="development level" value="Tbio"/>
</dbReference>
<dbReference type="PRO" id="PR:P28356"/>
<dbReference type="Proteomes" id="UP000005640">
    <property type="component" value="Chromosome 2"/>
</dbReference>
<dbReference type="RNAct" id="P28356">
    <property type="molecule type" value="protein"/>
</dbReference>
<dbReference type="Bgee" id="ENSG00000128709">
    <property type="expression patterns" value="Expressed in body of uterus and 93 other cell types or tissues"/>
</dbReference>
<dbReference type="GO" id="GO:0000785">
    <property type="term" value="C:chromatin"/>
    <property type="evidence" value="ECO:0000247"/>
    <property type="project" value="NTNU_SB"/>
</dbReference>
<dbReference type="GO" id="GO:0005730">
    <property type="term" value="C:nucleolus"/>
    <property type="evidence" value="ECO:0000314"/>
    <property type="project" value="HPA"/>
</dbReference>
<dbReference type="GO" id="GO:0005654">
    <property type="term" value="C:nucleoplasm"/>
    <property type="evidence" value="ECO:0000314"/>
    <property type="project" value="HPA"/>
</dbReference>
<dbReference type="GO" id="GO:0005634">
    <property type="term" value="C:nucleus"/>
    <property type="evidence" value="ECO:0000318"/>
    <property type="project" value="GO_Central"/>
</dbReference>
<dbReference type="GO" id="GO:0003700">
    <property type="term" value="F:DNA-binding transcription factor activity"/>
    <property type="evidence" value="ECO:0000318"/>
    <property type="project" value="GO_Central"/>
</dbReference>
<dbReference type="GO" id="GO:0000981">
    <property type="term" value="F:DNA-binding transcription factor activity, RNA polymerase II-specific"/>
    <property type="evidence" value="ECO:0000247"/>
    <property type="project" value="NTNU_SB"/>
</dbReference>
<dbReference type="GO" id="GO:0001227">
    <property type="term" value="F:DNA-binding transcription repressor activity, RNA polymerase II-specific"/>
    <property type="evidence" value="ECO:0000314"/>
    <property type="project" value="NTNU_SB"/>
</dbReference>
<dbReference type="GO" id="GO:0000978">
    <property type="term" value="F:RNA polymerase II cis-regulatory region sequence-specific DNA binding"/>
    <property type="evidence" value="ECO:0000318"/>
    <property type="project" value="GO_Central"/>
</dbReference>
<dbReference type="GO" id="GO:0000977">
    <property type="term" value="F:RNA polymerase II transcription regulatory region sequence-specific DNA binding"/>
    <property type="evidence" value="ECO:0000314"/>
    <property type="project" value="NTNU_SB"/>
</dbReference>
<dbReference type="GO" id="GO:1990837">
    <property type="term" value="F:sequence-specific double-stranded DNA binding"/>
    <property type="evidence" value="ECO:0000314"/>
    <property type="project" value="ARUK-UCL"/>
</dbReference>
<dbReference type="GO" id="GO:0008344">
    <property type="term" value="P:adult locomotory behavior"/>
    <property type="evidence" value="ECO:0007669"/>
    <property type="project" value="Ensembl"/>
</dbReference>
<dbReference type="GO" id="GO:0009952">
    <property type="term" value="P:anterior/posterior pattern specification"/>
    <property type="evidence" value="ECO:0000318"/>
    <property type="project" value="GO_Central"/>
</dbReference>
<dbReference type="GO" id="GO:0006351">
    <property type="term" value="P:DNA-templated transcription"/>
    <property type="evidence" value="ECO:0007669"/>
    <property type="project" value="InterPro"/>
</dbReference>
<dbReference type="GO" id="GO:0035115">
    <property type="term" value="P:embryonic forelimb morphogenesis"/>
    <property type="evidence" value="ECO:0007669"/>
    <property type="project" value="Ensembl"/>
</dbReference>
<dbReference type="GO" id="GO:0048704">
    <property type="term" value="P:embryonic skeletal system morphogenesis"/>
    <property type="evidence" value="ECO:0000318"/>
    <property type="project" value="GO_Central"/>
</dbReference>
<dbReference type="GO" id="GO:0035137">
    <property type="term" value="P:hindlimb morphogenesis"/>
    <property type="evidence" value="ECO:0007669"/>
    <property type="project" value="Ensembl"/>
</dbReference>
<dbReference type="GO" id="GO:0030879">
    <property type="term" value="P:mammary gland development"/>
    <property type="evidence" value="ECO:0007669"/>
    <property type="project" value="Ensembl"/>
</dbReference>
<dbReference type="GO" id="GO:0000122">
    <property type="term" value="P:negative regulation of transcription by RNA polymerase II"/>
    <property type="evidence" value="ECO:0000314"/>
    <property type="project" value="NTNU_SB"/>
</dbReference>
<dbReference type="GO" id="GO:0048935">
    <property type="term" value="P:peripheral nervous system neuron development"/>
    <property type="evidence" value="ECO:0007669"/>
    <property type="project" value="Ensembl"/>
</dbReference>
<dbReference type="GO" id="GO:0045944">
    <property type="term" value="P:positive regulation of transcription by RNA polymerase II"/>
    <property type="evidence" value="ECO:0007669"/>
    <property type="project" value="Ensembl"/>
</dbReference>
<dbReference type="GO" id="GO:0009954">
    <property type="term" value="P:proximal/distal pattern formation"/>
    <property type="evidence" value="ECO:0000318"/>
    <property type="project" value="GO_Central"/>
</dbReference>
<dbReference type="GO" id="GO:0006357">
    <property type="term" value="P:regulation of transcription by RNA polymerase II"/>
    <property type="evidence" value="ECO:0000318"/>
    <property type="project" value="GO_Central"/>
</dbReference>
<dbReference type="GO" id="GO:0007338">
    <property type="term" value="P:single fertilization"/>
    <property type="evidence" value="ECO:0007669"/>
    <property type="project" value="Ensembl"/>
</dbReference>
<dbReference type="GO" id="GO:0007519">
    <property type="term" value="P:skeletal muscle tissue development"/>
    <property type="evidence" value="ECO:0007669"/>
    <property type="project" value="Ensembl"/>
</dbReference>
<dbReference type="CDD" id="cd00086">
    <property type="entry name" value="homeodomain"/>
    <property type="match status" value="1"/>
</dbReference>
<dbReference type="FunFam" id="1.10.10.60:FF:000018">
    <property type="entry name" value="Homeobox A10"/>
    <property type="match status" value="1"/>
</dbReference>
<dbReference type="Gene3D" id="1.10.10.60">
    <property type="entry name" value="Homeodomain-like"/>
    <property type="match status" value="1"/>
</dbReference>
<dbReference type="InterPro" id="IPR050803">
    <property type="entry name" value="Abd-B_homeobox_TF"/>
</dbReference>
<dbReference type="InterPro" id="IPR001356">
    <property type="entry name" value="HD"/>
</dbReference>
<dbReference type="InterPro" id="IPR020479">
    <property type="entry name" value="HD_metazoa"/>
</dbReference>
<dbReference type="InterPro" id="IPR017970">
    <property type="entry name" value="Homeobox_CS"/>
</dbReference>
<dbReference type="InterPro" id="IPR009057">
    <property type="entry name" value="Homeodomain-like_sf"/>
</dbReference>
<dbReference type="InterPro" id="IPR006711">
    <property type="entry name" value="Hox9_activation_N"/>
</dbReference>
<dbReference type="PANTHER" id="PTHR45970">
    <property type="entry name" value="AGAP004664-PA"/>
    <property type="match status" value="1"/>
</dbReference>
<dbReference type="PANTHER" id="PTHR45970:SF4">
    <property type="entry name" value="HOMEOBOX PROTEIN HOX-D9"/>
    <property type="match status" value="1"/>
</dbReference>
<dbReference type="Pfam" id="PF00046">
    <property type="entry name" value="Homeodomain"/>
    <property type="match status" value="1"/>
</dbReference>
<dbReference type="Pfam" id="PF04617">
    <property type="entry name" value="Hox9_act"/>
    <property type="match status" value="1"/>
</dbReference>
<dbReference type="PRINTS" id="PR00024">
    <property type="entry name" value="HOMEOBOX"/>
</dbReference>
<dbReference type="SMART" id="SM00389">
    <property type="entry name" value="HOX"/>
    <property type="match status" value="1"/>
</dbReference>
<dbReference type="SUPFAM" id="SSF46689">
    <property type="entry name" value="Homeodomain-like"/>
    <property type="match status" value="1"/>
</dbReference>
<dbReference type="PROSITE" id="PS00027">
    <property type="entry name" value="HOMEOBOX_1"/>
    <property type="match status" value="1"/>
</dbReference>
<dbReference type="PROSITE" id="PS50071">
    <property type="entry name" value="HOMEOBOX_2"/>
    <property type="match status" value="1"/>
</dbReference>
<feature type="chain" id="PRO_0000200220" description="Homeobox protein Hox-D9">
    <location>
        <begin position="1"/>
        <end position="352"/>
    </location>
</feature>
<feature type="DNA-binding region" description="Homeobox" evidence="1">
    <location>
        <begin position="285"/>
        <end position="344"/>
    </location>
</feature>
<feature type="region of interest" description="Disordered" evidence="2">
    <location>
        <begin position="126"/>
        <end position="208"/>
    </location>
</feature>
<feature type="region of interest" description="Disordered" evidence="2">
    <location>
        <begin position="229"/>
        <end position="276"/>
    </location>
</feature>
<feature type="compositionally biased region" description="Gly residues" evidence="2">
    <location>
        <begin position="126"/>
        <end position="143"/>
    </location>
</feature>
<feature type="compositionally biased region" description="Low complexity" evidence="2">
    <location>
        <begin position="166"/>
        <end position="188"/>
    </location>
</feature>
<feature type="compositionally biased region" description="Polar residues" evidence="2">
    <location>
        <begin position="197"/>
        <end position="208"/>
    </location>
</feature>
<feature type="compositionally biased region" description="Gly residues" evidence="2">
    <location>
        <begin position="229"/>
        <end position="238"/>
    </location>
</feature>
<feature type="modified residue" description="Phosphoserine" evidence="5">
    <location>
        <position position="146"/>
    </location>
</feature>
<feature type="sequence variant" id="VAR_031851" evidence="3">
    <location>
        <position position="269"/>
    </location>
</feature>
<feature type="sequence conflict" description="In Ref. 3; AAH44855." evidence="4" ref="3">
    <original>GPSPGPSGPANGR</original>
    <variation>VPALAPAAQPTGC</variation>
    <location>
        <begin position="144"/>
        <end position="156"/>
    </location>
</feature>
<feature type="sequence conflict" description="In Ref. 1; CAA42016." evidence="4" ref="1">
    <original>AATGGT</original>
    <variation>GGDGGN</variation>
    <location>
        <begin position="219"/>
        <end position="224"/>
    </location>
</feature>
<feature type="sequence conflict" description="In Ref. 1; CAA42016." evidence="4" ref="1">
    <original>A</original>
    <variation>E</variation>
    <location>
        <position position="276"/>
    </location>
</feature>
<proteinExistence type="evidence at protein level"/>
<organism>
    <name type="scientific">Homo sapiens</name>
    <name type="common">Human</name>
    <dbReference type="NCBI Taxonomy" id="9606"/>
    <lineage>
        <taxon>Eukaryota</taxon>
        <taxon>Metazoa</taxon>
        <taxon>Chordata</taxon>
        <taxon>Craniata</taxon>
        <taxon>Vertebrata</taxon>
        <taxon>Euteleostomi</taxon>
        <taxon>Mammalia</taxon>
        <taxon>Eutheria</taxon>
        <taxon>Euarchontoglires</taxon>
        <taxon>Primates</taxon>
        <taxon>Haplorrhini</taxon>
        <taxon>Catarrhini</taxon>
        <taxon>Hominidae</taxon>
        <taxon>Homo</taxon>
    </lineage>
</organism>
<protein>
    <recommendedName>
        <fullName>Homeobox protein Hox-D9</fullName>
    </recommendedName>
    <alternativeName>
        <fullName>Homeobox protein Hox-4C</fullName>
    </alternativeName>
    <alternativeName>
        <fullName>Homeobox protein Hox-5.2</fullName>
    </alternativeName>
</protein>